<comment type="function">
    <text evidence="4 5 6 7 8">Protects the virus against cell antiviral state by blocking host interferon signaling. Mechanistically, targets host phosphorylated STAT1 (phospho-STAT1) for degradation, thereby inhibiting the interferon alpha signaling pathway (PubMed:12885886, PubMed:26859759). Plays a role in the inhibition of host apoptosis (PubMed:30290847). Interacts with and down-regulates the expression of host TXNL1. In turn, inhibits TXNL1-induced apoptosis through the BCL2-BAX-caspase 3 pathway (PubMed:30290847). Inhibits host apoptosis also by negatively regulating host CacyBP/SIP (PubMed:30234028). Promotes viral replication by activating the extracellular signal-regulated kinase (ERK) pathway (PubMed:30213106).</text>
</comment>
<comment type="subunit">
    <text evidence="7 8">Interacts with host STAT1. Interacts with host TXNL1 (PubMed:30290847). Interacts (via C-terminus) with host CacyBP; this interaction inhibits host cell apoptosis (PubMed:30234028).</text>
</comment>
<comment type="subcellular location">
    <subcellularLocation>
        <location evidence="6 7 8">Host cytoplasm</location>
    </subcellularLocation>
    <subcellularLocation>
        <location evidence="6 7 8">Host nucleus</location>
    </subcellularLocation>
</comment>
<comment type="RNA editing">
    <location>
        <position position="136" evidence="1"/>
    </location>
    <text evidence="1">Partially edited. RNA editing at this position consists of an insertion of one or two guanine nucleotides. The sequence displayed here is the V protein, derived from the +1G edited RNA. The unedited RNA gives rise to the P protein (AC Q9DLD6), the +2G edited RNA gives rise to the W protein (AC P0C766) (By similarity).</text>
</comment>
<comment type="miscellaneous">
    <text>The protein V from strain B1 contains one putative zinc-binding domain on its C-terminal region whereas protein V from wild-type avulavirus strains possess two.</text>
</comment>
<comment type="similarity">
    <text evidence="9">Belongs to the paramyxoviruses V protein family.</text>
</comment>
<name>V_NDVB1</name>
<evidence type="ECO:0000250" key="1"/>
<evidence type="ECO:0000250" key="2">
    <source>
        <dbReference type="UniProtKB" id="P11207"/>
    </source>
</evidence>
<evidence type="ECO:0000256" key="3">
    <source>
        <dbReference type="SAM" id="MobiDB-lite"/>
    </source>
</evidence>
<evidence type="ECO:0000269" key="4">
    <source>
    </source>
</evidence>
<evidence type="ECO:0000269" key="5">
    <source>
    </source>
</evidence>
<evidence type="ECO:0000269" key="6">
    <source>
    </source>
</evidence>
<evidence type="ECO:0000269" key="7">
    <source>
    </source>
</evidence>
<evidence type="ECO:0000269" key="8">
    <source>
    </source>
</evidence>
<evidence type="ECO:0000305" key="9"/>
<sequence length="239" mass="25730">MATFTDAEIDELFETSGTVIDNIITAQGKPAETVGRSAIPQGKTKVLSAAWEKHGSIQPPASQDNPDRQDRSDKQPSTPEQTTPHDSPPATSADQPPTQATDEAVDTQLRTGASNSLLLMLDKLSNKSSNAKKGPMVEPPRGESPTSDSTAGESTQSRKQSGKTAEPSQGRPWKPGHRREHSISWTMGGVTTISWCNPSWSPIKAEPKQYPCFCGSFPPTCRLCASDDVYYGGDFPKSK</sequence>
<feature type="chain" id="PRO_0000390629" description="Protein V">
    <location>
        <begin position="1"/>
        <end position="239"/>
    </location>
</feature>
<feature type="region of interest" description="Disordered" evidence="3">
    <location>
        <begin position="47"/>
        <end position="111"/>
    </location>
</feature>
<feature type="region of interest" description="Disordered" evidence="3">
    <location>
        <begin position="127"/>
        <end position="184"/>
    </location>
</feature>
<feature type="compositionally biased region" description="Basic and acidic residues" evidence="3">
    <location>
        <begin position="65"/>
        <end position="74"/>
    </location>
</feature>
<feature type="compositionally biased region" description="Polar residues" evidence="3">
    <location>
        <begin position="75"/>
        <end position="101"/>
    </location>
</feature>
<feature type="compositionally biased region" description="Polar residues" evidence="3">
    <location>
        <begin position="144"/>
        <end position="167"/>
    </location>
</feature>
<feature type="binding site" evidence="2">
    <location>
        <position position="177"/>
    </location>
    <ligand>
        <name>Zn(2+)</name>
        <dbReference type="ChEBI" id="CHEBI:29105"/>
        <label>1</label>
    </ligand>
</feature>
<feature type="binding site" evidence="2">
    <location>
        <position position="196"/>
    </location>
    <ligand>
        <name>Zn(2+)</name>
        <dbReference type="ChEBI" id="CHEBI:29105"/>
        <label>1</label>
    </ligand>
</feature>
<feature type="binding site" evidence="2">
    <location>
        <position position="212"/>
    </location>
    <ligand>
        <name>Zn(2+)</name>
        <dbReference type="ChEBI" id="CHEBI:29105"/>
        <label>2</label>
    </ligand>
</feature>
<feature type="binding site" evidence="2">
    <location>
        <position position="214"/>
    </location>
    <ligand>
        <name>Zn(2+)</name>
        <dbReference type="ChEBI" id="CHEBI:29105"/>
        <label>2</label>
    </ligand>
</feature>
<feature type="binding site" evidence="2">
    <location>
        <position position="221"/>
    </location>
    <ligand>
        <name>Zn(2+)</name>
        <dbReference type="ChEBI" id="CHEBI:29105"/>
        <label>1</label>
    </ligand>
</feature>
<feature type="binding site" evidence="2">
    <location>
        <position position="224"/>
    </location>
    <ligand>
        <name>Zn(2+)</name>
        <dbReference type="ChEBI" id="CHEBI:29105"/>
        <label>1</label>
    </ligand>
</feature>
<protein>
    <recommendedName>
        <fullName>Protein V</fullName>
    </recommendedName>
</protein>
<proteinExistence type="evidence at protein level"/>
<organismHost>
    <name type="scientific">Gallus gallus</name>
    <name type="common">Chicken</name>
    <dbReference type="NCBI Taxonomy" id="9031"/>
</organismHost>
<accession>P0C765</accession>
<keyword id="KW-1035">Host cytoplasm</keyword>
<keyword id="KW-1048">Host nucleus</keyword>
<keyword id="KW-0945">Host-virus interaction</keyword>
<keyword id="KW-1090">Inhibition of host innate immune response by virus</keyword>
<keyword id="KW-1089">Inhibition of host MDA5 by virus</keyword>
<keyword id="KW-1113">Inhibition of host RLR pathway by virus</keyword>
<keyword id="KW-0922">Interferon antiviral system evasion</keyword>
<keyword id="KW-0479">Metal-binding</keyword>
<keyword id="KW-1119">Modulation of host cell apoptosis by virus</keyword>
<keyword id="KW-1185">Reference proteome</keyword>
<keyword id="KW-0691">RNA editing</keyword>
<keyword id="KW-0899">Viral immunoevasion</keyword>
<keyword id="KW-0862">Zinc</keyword>
<gene>
    <name type="primary">V</name>
</gene>
<organism>
    <name type="scientific">Newcastle disease virus (strain Chicken/United States/B1/48)</name>
    <name type="common">NDV</name>
    <dbReference type="NCBI Taxonomy" id="652953"/>
    <lineage>
        <taxon>Viruses</taxon>
        <taxon>Riboviria</taxon>
        <taxon>Orthornavirae</taxon>
        <taxon>Negarnaviricota</taxon>
        <taxon>Haploviricotina</taxon>
        <taxon>Monjiviricetes</taxon>
        <taxon>Mononegavirales</taxon>
        <taxon>Paramyxoviridae</taxon>
        <taxon>Avulavirinae</taxon>
        <taxon>Orthoavulavirus</taxon>
        <taxon>Orthoavulavirus javaense</taxon>
        <taxon>Avian paramyxovirus 1</taxon>
    </lineage>
</organism>
<dbReference type="EMBL" id="AF309418">
    <property type="status" value="NOT_ANNOTATED_CDS"/>
    <property type="molecule type" value="Genomic_RNA"/>
</dbReference>
<dbReference type="IntAct" id="P0C765">
    <property type="interactions" value="10"/>
</dbReference>
<dbReference type="Proteomes" id="UP000002328">
    <property type="component" value="Segment"/>
</dbReference>
<dbReference type="GO" id="GO:0030430">
    <property type="term" value="C:host cell cytoplasm"/>
    <property type="evidence" value="ECO:0000314"/>
    <property type="project" value="UniProtKB"/>
</dbReference>
<dbReference type="GO" id="GO:0042025">
    <property type="term" value="C:host cell nucleus"/>
    <property type="evidence" value="ECO:0000314"/>
    <property type="project" value="UniProtKB"/>
</dbReference>
<dbReference type="GO" id="GO:0046872">
    <property type="term" value="F:metal ion binding"/>
    <property type="evidence" value="ECO:0007669"/>
    <property type="project" value="UniProtKB-KW"/>
</dbReference>
<dbReference type="GO" id="GO:0033668">
    <property type="term" value="P:symbiont-mediated suppression of host apoptosis"/>
    <property type="evidence" value="ECO:0000314"/>
    <property type="project" value="UniProtKB"/>
</dbReference>
<dbReference type="GO" id="GO:0039554">
    <property type="term" value="P:symbiont-mediated suppression of host cytoplasmic pattern recognition receptor signaling pathway via inhibition of MDA-5 activity"/>
    <property type="evidence" value="ECO:0007669"/>
    <property type="project" value="UniProtKB-KW"/>
</dbReference>
<dbReference type="GO" id="GO:0039563">
    <property type="term" value="P:symbiont-mediated suppression of host JAK-STAT cascade via inhibition of STAT1 activity"/>
    <property type="evidence" value="ECO:0000314"/>
    <property type="project" value="UniProtKB"/>
</dbReference>
<dbReference type="Gene3D" id="4.10.80.340">
    <property type="match status" value="1"/>
</dbReference>
<dbReference type="InterPro" id="IPR024279">
    <property type="entry name" value="Paramyx_V_Zn-bd"/>
</dbReference>
<dbReference type="InterPro" id="IPR025909">
    <property type="entry name" value="Soyouz_module"/>
</dbReference>
<dbReference type="Pfam" id="PF14313">
    <property type="entry name" value="Soyouz_module"/>
    <property type="match status" value="1"/>
</dbReference>
<dbReference type="Pfam" id="PF13008">
    <property type="entry name" value="zf-Paramyx-P"/>
    <property type="match status" value="1"/>
</dbReference>
<reference key="1">
    <citation type="submission" date="2000-09" db="EMBL/GenBank/DDBJ databases">
        <title>Complete sequence for the B1 strain of Newcastle disease virus.</title>
        <authorList>
            <person name="Sellers H.S."/>
            <person name="Seal B.S."/>
        </authorList>
    </citation>
    <scope>NUCLEOTIDE SEQUENCE [GENOMIC RNA]</scope>
</reference>
<reference key="2">
    <citation type="journal article" date="2003" name="J. Virol.">
        <title>Newcastle disease virus V protein is associated with viral pathogenesis and functions as an alpha interferon antagonist.</title>
        <authorList>
            <person name="Huang Z."/>
            <person name="Krishnamurthy S."/>
            <person name="Panda A."/>
            <person name="Samal S.K."/>
        </authorList>
    </citation>
    <scope>FUNCTION</scope>
</reference>
<reference key="3">
    <citation type="journal article" date="2016" name="PLoS ONE">
        <title>Newcastle Disease Virus V Protein Targets Phosphorylated STAT1 to Block IFN-I Signaling.</title>
        <authorList>
            <person name="Qiu X."/>
            <person name="Fu Q."/>
            <person name="Meng C."/>
            <person name="Yu S."/>
            <person name="Zhan Y."/>
            <person name="Dong L."/>
            <person name="Song C."/>
            <person name="Sun Y."/>
            <person name="Tan L."/>
            <person name="Hu S."/>
            <person name="Wang X."/>
            <person name="Liu X."/>
            <person name="Peng D."/>
            <person name="Liu X."/>
            <person name="Ding C."/>
        </authorList>
    </citation>
    <scope>FUNCTION</scope>
</reference>
<reference key="4">
    <citation type="journal article" date="2018" name="Front. Cell. Infect. Microbiol.">
        <title>Newcastle Disease Virus V Protein Inhibits Cell Apoptosis and Promotes Viral Replication by Targeting CacyBP/SIP.</title>
        <authorList>
            <person name="Chu Z."/>
            <person name="Wang C."/>
            <person name="Tang Q."/>
            <person name="Shi X."/>
            <person name="Gao X."/>
            <person name="Ma J."/>
            <person name="Lu K."/>
            <person name="Han Q."/>
            <person name="Jia Y."/>
            <person name="Wang X."/>
            <person name="Adam F.E.A."/>
            <person name="Liu H."/>
            <person name="Xiao S."/>
            <person name="Wang X."/>
            <person name="Yang Z."/>
        </authorList>
    </citation>
    <scope>FUNCTION</scope>
    <scope>SUBCELLULAR LOCATION</scope>
    <scope>INTERACTION WITH HOST CACYBP</scope>
</reference>
<reference key="5">
    <citation type="journal article" date="2018" name="Viruses">
        <title>Newcastle Disease Virus V Protein Promotes Viral Replication in HeLa Cells through the Activation of MEK/ERK Signaling.</title>
        <authorList>
            <person name="Chu Z."/>
            <person name="Ma J."/>
            <person name="Wang C."/>
            <person name="Lu K."/>
            <person name="Li X."/>
            <person name="Liu H."/>
            <person name="Wang X."/>
            <person name="Xiao S."/>
            <person name="Yang Z."/>
        </authorList>
    </citation>
    <scope>FUNCTION</scope>
    <scope>SUBCELLULAR LOCATION</scope>
</reference>
<reference key="6">
    <citation type="journal article" date="2018" name="Vet. Res.">
        <title>Newcastle disease virus V protein inhibits apoptosis in DF-1 cells by downregulating TXNL1.</title>
        <authorList>
            <person name="Wang C."/>
            <person name="Chu Z."/>
            <person name="Liu W."/>
            <person name="Pang Y."/>
            <person name="Gao X."/>
            <person name="Tang Q."/>
            <person name="Ma J."/>
            <person name="Lu K."/>
            <person name="Adam F.E.A."/>
            <person name="Dang R."/>
            <person name="Xiao S."/>
            <person name="Wang X."/>
            <person name="Yang Z."/>
        </authorList>
    </citation>
    <scope>FUNCTION</scope>
    <scope>SUBCELLULAR LOCATION</scope>
    <scope>INTERACTION WITH HOST TXNL1</scope>
</reference>